<name>MTGA_XANCB</name>
<protein>
    <recommendedName>
        <fullName evidence="1">Biosynthetic peptidoglycan transglycosylase</fullName>
        <ecNumber evidence="1">2.4.99.28</ecNumber>
    </recommendedName>
    <alternativeName>
        <fullName evidence="1">Glycan polymerase</fullName>
    </alternativeName>
    <alternativeName>
        <fullName evidence="1">Peptidoglycan glycosyltransferase MtgA</fullName>
        <shortName evidence="1">PGT</shortName>
    </alternativeName>
</protein>
<feature type="chain" id="PRO_1000133612" description="Biosynthetic peptidoglycan transglycosylase">
    <location>
        <begin position="1"/>
        <end position="246"/>
    </location>
</feature>
<feature type="transmembrane region" description="Helical" evidence="1">
    <location>
        <begin position="20"/>
        <end position="42"/>
    </location>
</feature>
<keyword id="KW-0997">Cell inner membrane</keyword>
<keyword id="KW-1003">Cell membrane</keyword>
<keyword id="KW-0133">Cell shape</keyword>
<keyword id="KW-0961">Cell wall biogenesis/degradation</keyword>
<keyword id="KW-0328">Glycosyltransferase</keyword>
<keyword id="KW-0472">Membrane</keyword>
<keyword id="KW-0573">Peptidoglycan synthesis</keyword>
<keyword id="KW-0808">Transferase</keyword>
<keyword id="KW-0812">Transmembrane</keyword>
<keyword id="KW-1133">Transmembrane helix</keyword>
<dbReference type="EC" id="2.4.99.28" evidence="1"/>
<dbReference type="EMBL" id="AM920689">
    <property type="protein sequence ID" value="CAP50640.1"/>
    <property type="molecule type" value="Genomic_DNA"/>
</dbReference>
<dbReference type="SMR" id="B0RQA5"/>
<dbReference type="KEGG" id="xca:xcc-b100_1290"/>
<dbReference type="HOGENOM" id="CLU_006354_1_1_6"/>
<dbReference type="UniPathway" id="UPA00219"/>
<dbReference type="Proteomes" id="UP000001188">
    <property type="component" value="Chromosome"/>
</dbReference>
<dbReference type="GO" id="GO:0009274">
    <property type="term" value="C:peptidoglycan-based cell wall"/>
    <property type="evidence" value="ECO:0007669"/>
    <property type="project" value="InterPro"/>
</dbReference>
<dbReference type="GO" id="GO:0005886">
    <property type="term" value="C:plasma membrane"/>
    <property type="evidence" value="ECO:0007669"/>
    <property type="project" value="UniProtKB-SubCell"/>
</dbReference>
<dbReference type="GO" id="GO:0016763">
    <property type="term" value="F:pentosyltransferase activity"/>
    <property type="evidence" value="ECO:0007669"/>
    <property type="project" value="InterPro"/>
</dbReference>
<dbReference type="GO" id="GO:0008955">
    <property type="term" value="F:peptidoglycan glycosyltransferase activity"/>
    <property type="evidence" value="ECO:0007669"/>
    <property type="project" value="UniProtKB-UniRule"/>
</dbReference>
<dbReference type="GO" id="GO:0071555">
    <property type="term" value="P:cell wall organization"/>
    <property type="evidence" value="ECO:0007669"/>
    <property type="project" value="UniProtKB-KW"/>
</dbReference>
<dbReference type="GO" id="GO:0009252">
    <property type="term" value="P:peptidoglycan biosynthetic process"/>
    <property type="evidence" value="ECO:0007669"/>
    <property type="project" value="UniProtKB-UniRule"/>
</dbReference>
<dbReference type="GO" id="GO:0008360">
    <property type="term" value="P:regulation of cell shape"/>
    <property type="evidence" value="ECO:0007669"/>
    <property type="project" value="UniProtKB-KW"/>
</dbReference>
<dbReference type="Gene3D" id="1.10.3810.10">
    <property type="entry name" value="Biosynthetic peptidoglycan transglycosylase-like"/>
    <property type="match status" value="1"/>
</dbReference>
<dbReference type="HAMAP" id="MF_00766">
    <property type="entry name" value="PGT_MtgA"/>
    <property type="match status" value="1"/>
</dbReference>
<dbReference type="InterPro" id="IPR001264">
    <property type="entry name" value="Glyco_trans_51"/>
</dbReference>
<dbReference type="InterPro" id="IPR023346">
    <property type="entry name" value="Lysozyme-like_dom_sf"/>
</dbReference>
<dbReference type="InterPro" id="IPR036950">
    <property type="entry name" value="PBP_transglycosylase"/>
</dbReference>
<dbReference type="InterPro" id="IPR011812">
    <property type="entry name" value="Pep_trsgly"/>
</dbReference>
<dbReference type="NCBIfam" id="TIGR02070">
    <property type="entry name" value="mono_pep_trsgly"/>
    <property type="match status" value="1"/>
</dbReference>
<dbReference type="PANTHER" id="PTHR30400:SF0">
    <property type="entry name" value="BIOSYNTHETIC PEPTIDOGLYCAN TRANSGLYCOSYLASE"/>
    <property type="match status" value="1"/>
</dbReference>
<dbReference type="PANTHER" id="PTHR30400">
    <property type="entry name" value="MONOFUNCTIONAL BIOSYNTHETIC PEPTIDOGLYCAN TRANSGLYCOSYLASE"/>
    <property type="match status" value="1"/>
</dbReference>
<dbReference type="Pfam" id="PF00912">
    <property type="entry name" value="Transgly"/>
    <property type="match status" value="1"/>
</dbReference>
<dbReference type="SUPFAM" id="SSF53955">
    <property type="entry name" value="Lysozyme-like"/>
    <property type="match status" value="1"/>
</dbReference>
<accession>B0RQA5</accession>
<reference key="1">
    <citation type="journal article" date="2008" name="J. Biotechnol.">
        <title>The genome of Xanthomonas campestris pv. campestris B100 and its use for the reconstruction of metabolic pathways involved in xanthan biosynthesis.</title>
        <authorList>
            <person name="Vorhoelter F.-J."/>
            <person name="Schneiker S."/>
            <person name="Goesmann A."/>
            <person name="Krause L."/>
            <person name="Bekel T."/>
            <person name="Kaiser O."/>
            <person name="Linke B."/>
            <person name="Patschkowski T."/>
            <person name="Rueckert C."/>
            <person name="Schmid J."/>
            <person name="Sidhu V.K."/>
            <person name="Sieber V."/>
            <person name="Tauch A."/>
            <person name="Watt S.A."/>
            <person name="Weisshaar B."/>
            <person name="Becker A."/>
            <person name="Niehaus K."/>
            <person name="Puehler A."/>
        </authorList>
    </citation>
    <scope>NUCLEOTIDE SEQUENCE [LARGE SCALE GENOMIC DNA]</scope>
    <source>
        <strain>B100</strain>
    </source>
</reference>
<evidence type="ECO:0000255" key="1">
    <source>
        <dbReference type="HAMAP-Rule" id="MF_00766"/>
    </source>
</evidence>
<sequence>MGTDGLDDKQARPPRRARRSLRWVLAAPLLFAAASVLQVLALRIIDPPISTVMVGRYLEAWGEGEAGFSLHHQWRDLDEIAPSLPISVVAAEDQQFPSHHGFDLQAIEKARDYNARGGRVRGASTISQQVAKNVFLWQGRSWVRKGLEAWYTLLIELFWPKQRILEMYVNVAEFGDGIYGAQAAARQFWGKDASRLTPTESARLAAVLPSPRRYDARRPGAYVQRRTAWIQRQARQLGGPGYLQAP</sequence>
<gene>
    <name evidence="1" type="primary">mtgA</name>
    <name type="ordered locus">xcc-b100_1290</name>
</gene>
<comment type="function">
    <text evidence="1">Peptidoglycan polymerase that catalyzes glycan chain elongation from lipid-linked precursors.</text>
</comment>
<comment type="catalytic activity">
    <reaction evidence="1">
        <text>[GlcNAc-(1-&gt;4)-Mur2Ac(oyl-L-Ala-gamma-D-Glu-L-Lys-D-Ala-D-Ala)](n)-di-trans,octa-cis-undecaprenyl diphosphate + beta-D-GlcNAc-(1-&gt;4)-Mur2Ac(oyl-L-Ala-gamma-D-Glu-L-Lys-D-Ala-D-Ala)-di-trans,octa-cis-undecaprenyl diphosphate = [GlcNAc-(1-&gt;4)-Mur2Ac(oyl-L-Ala-gamma-D-Glu-L-Lys-D-Ala-D-Ala)](n+1)-di-trans,octa-cis-undecaprenyl diphosphate + di-trans,octa-cis-undecaprenyl diphosphate + H(+)</text>
        <dbReference type="Rhea" id="RHEA:23708"/>
        <dbReference type="Rhea" id="RHEA-COMP:9602"/>
        <dbReference type="Rhea" id="RHEA-COMP:9603"/>
        <dbReference type="ChEBI" id="CHEBI:15378"/>
        <dbReference type="ChEBI" id="CHEBI:58405"/>
        <dbReference type="ChEBI" id="CHEBI:60033"/>
        <dbReference type="ChEBI" id="CHEBI:78435"/>
        <dbReference type="EC" id="2.4.99.28"/>
    </reaction>
</comment>
<comment type="pathway">
    <text evidence="1">Cell wall biogenesis; peptidoglycan biosynthesis.</text>
</comment>
<comment type="subcellular location">
    <subcellularLocation>
        <location evidence="1">Cell inner membrane</location>
        <topology evidence="1">Single-pass membrane protein</topology>
    </subcellularLocation>
</comment>
<comment type="similarity">
    <text evidence="1">Belongs to the glycosyltransferase 51 family.</text>
</comment>
<proteinExistence type="inferred from homology"/>
<organism>
    <name type="scientific">Xanthomonas campestris pv. campestris (strain B100)</name>
    <dbReference type="NCBI Taxonomy" id="509169"/>
    <lineage>
        <taxon>Bacteria</taxon>
        <taxon>Pseudomonadati</taxon>
        <taxon>Pseudomonadota</taxon>
        <taxon>Gammaproteobacteria</taxon>
        <taxon>Lysobacterales</taxon>
        <taxon>Lysobacteraceae</taxon>
        <taxon>Xanthomonas</taxon>
    </lineage>
</organism>